<feature type="chain" id="PRO_1000003989" description="Small ribosomal subunit protein uS2">
    <location>
        <begin position="1"/>
        <end position="291"/>
    </location>
</feature>
<reference key="1">
    <citation type="submission" date="2005-11" db="EMBL/GenBank/DDBJ databases">
        <title>The complete genome sequence of Lawsonia intracellularis: the causative agent of proliferative enteropathy.</title>
        <authorList>
            <person name="Kaur K."/>
            <person name="Zhang Q."/>
            <person name="Beckler D."/>
            <person name="Munir S."/>
            <person name="Li L."/>
            <person name="Kinsley K."/>
            <person name="Herron L."/>
            <person name="Peterson A."/>
            <person name="May B."/>
            <person name="Singh S."/>
            <person name="Gebhart C."/>
            <person name="Kapur V."/>
        </authorList>
    </citation>
    <scope>NUCLEOTIDE SEQUENCE [LARGE SCALE GENOMIC DNA]</scope>
    <source>
        <strain>PHE/MN1-00</strain>
    </source>
</reference>
<dbReference type="EMBL" id="AM180252">
    <property type="protein sequence ID" value="CAJ54433.1"/>
    <property type="molecule type" value="Genomic_DNA"/>
</dbReference>
<dbReference type="RefSeq" id="WP_011526462.1">
    <property type="nucleotide sequence ID" value="NC_008011.1"/>
</dbReference>
<dbReference type="SMR" id="Q1MRE3"/>
<dbReference type="STRING" id="363253.LI0377"/>
<dbReference type="KEGG" id="lip:LI0377"/>
<dbReference type="eggNOG" id="COG0052">
    <property type="taxonomic scope" value="Bacteria"/>
</dbReference>
<dbReference type="HOGENOM" id="CLU_040318_2_2_7"/>
<dbReference type="OrthoDB" id="9808036at2"/>
<dbReference type="Proteomes" id="UP000002430">
    <property type="component" value="Chromosome"/>
</dbReference>
<dbReference type="GO" id="GO:0022627">
    <property type="term" value="C:cytosolic small ribosomal subunit"/>
    <property type="evidence" value="ECO:0007669"/>
    <property type="project" value="TreeGrafter"/>
</dbReference>
<dbReference type="GO" id="GO:0003735">
    <property type="term" value="F:structural constituent of ribosome"/>
    <property type="evidence" value="ECO:0007669"/>
    <property type="project" value="InterPro"/>
</dbReference>
<dbReference type="GO" id="GO:0006412">
    <property type="term" value="P:translation"/>
    <property type="evidence" value="ECO:0007669"/>
    <property type="project" value="UniProtKB-UniRule"/>
</dbReference>
<dbReference type="CDD" id="cd01425">
    <property type="entry name" value="RPS2"/>
    <property type="match status" value="1"/>
</dbReference>
<dbReference type="FunFam" id="1.10.287.610:FF:000001">
    <property type="entry name" value="30S ribosomal protein S2"/>
    <property type="match status" value="1"/>
</dbReference>
<dbReference type="Gene3D" id="3.40.50.10490">
    <property type="entry name" value="Glucose-6-phosphate isomerase like protein, domain 1"/>
    <property type="match status" value="1"/>
</dbReference>
<dbReference type="Gene3D" id="1.10.287.610">
    <property type="entry name" value="Helix hairpin bin"/>
    <property type="match status" value="1"/>
</dbReference>
<dbReference type="HAMAP" id="MF_00291_B">
    <property type="entry name" value="Ribosomal_uS2_B"/>
    <property type="match status" value="1"/>
</dbReference>
<dbReference type="InterPro" id="IPR001865">
    <property type="entry name" value="Ribosomal_uS2"/>
</dbReference>
<dbReference type="InterPro" id="IPR005706">
    <property type="entry name" value="Ribosomal_uS2_bac/mit/plastid"/>
</dbReference>
<dbReference type="InterPro" id="IPR018130">
    <property type="entry name" value="Ribosomal_uS2_CS"/>
</dbReference>
<dbReference type="InterPro" id="IPR023591">
    <property type="entry name" value="Ribosomal_uS2_flav_dom_sf"/>
</dbReference>
<dbReference type="NCBIfam" id="TIGR01011">
    <property type="entry name" value="rpsB_bact"/>
    <property type="match status" value="1"/>
</dbReference>
<dbReference type="PANTHER" id="PTHR12534">
    <property type="entry name" value="30S RIBOSOMAL PROTEIN S2 PROKARYOTIC AND ORGANELLAR"/>
    <property type="match status" value="1"/>
</dbReference>
<dbReference type="PANTHER" id="PTHR12534:SF0">
    <property type="entry name" value="SMALL RIBOSOMAL SUBUNIT PROTEIN US2M"/>
    <property type="match status" value="1"/>
</dbReference>
<dbReference type="Pfam" id="PF00318">
    <property type="entry name" value="Ribosomal_S2"/>
    <property type="match status" value="1"/>
</dbReference>
<dbReference type="PRINTS" id="PR00395">
    <property type="entry name" value="RIBOSOMALS2"/>
</dbReference>
<dbReference type="SUPFAM" id="SSF52313">
    <property type="entry name" value="Ribosomal protein S2"/>
    <property type="match status" value="1"/>
</dbReference>
<dbReference type="PROSITE" id="PS00962">
    <property type="entry name" value="RIBOSOMAL_S2_1"/>
    <property type="match status" value="1"/>
</dbReference>
<dbReference type="PROSITE" id="PS00963">
    <property type="entry name" value="RIBOSOMAL_S2_2"/>
    <property type="match status" value="1"/>
</dbReference>
<name>RS2_LAWIP</name>
<sequence length="291" mass="32820">MAYVSMKQMLETGVHFGHQTRRWNPKMRPYIFGARNGIHIIDLQQTVKLYRAAHDKIVETVAAGGSVLFVGTKRQAQEAIATEATRAGQYYVANRWMGGTLTNFSTIQKSIERLNRLETMFSDGSVNRYQKKEILTLNREMDKLELTLGGIKNMERLPQLIFIIDPHRENIAVKEGRKLGIPIMAVTDTNCDPDLIDYIIPGNDDAIRAIKLFVTAMADACIEGEALQKDTKNKNLEEELKQIATAECNKESTSIEQELIIASEQTETKENNIEESVSEVVITNESELITE</sequence>
<evidence type="ECO:0000255" key="1">
    <source>
        <dbReference type="HAMAP-Rule" id="MF_00291"/>
    </source>
</evidence>
<evidence type="ECO:0000305" key="2"/>
<gene>
    <name evidence="1" type="primary">rpsB</name>
    <name type="ordered locus">LI0377</name>
</gene>
<accession>Q1MRE3</accession>
<organism>
    <name type="scientific">Lawsonia intracellularis (strain PHE/MN1-00)</name>
    <dbReference type="NCBI Taxonomy" id="363253"/>
    <lineage>
        <taxon>Bacteria</taxon>
        <taxon>Pseudomonadati</taxon>
        <taxon>Thermodesulfobacteriota</taxon>
        <taxon>Desulfovibrionia</taxon>
        <taxon>Desulfovibrionales</taxon>
        <taxon>Desulfovibrionaceae</taxon>
        <taxon>Lawsonia</taxon>
    </lineage>
</organism>
<protein>
    <recommendedName>
        <fullName evidence="1">Small ribosomal subunit protein uS2</fullName>
    </recommendedName>
    <alternativeName>
        <fullName evidence="2">30S ribosomal protein S2</fullName>
    </alternativeName>
</protein>
<proteinExistence type="inferred from homology"/>
<comment type="similarity">
    <text evidence="1">Belongs to the universal ribosomal protein uS2 family.</text>
</comment>
<keyword id="KW-1185">Reference proteome</keyword>
<keyword id="KW-0687">Ribonucleoprotein</keyword>
<keyword id="KW-0689">Ribosomal protein</keyword>